<dbReference type="EC" id="6.3.2.8" evidence="1"/>
<dbReference type="EMBL" id="CP001120">
    <property type="protein sequence ID" value="ACF69235.1"/>
    <property type="molecule type" value="Genomic_DNA"/>
</dbReference>
<dbReference type="RefSeq" id="WP_001096070.1">
    <property type="nucleotide sequence ID" value="NC_011083.1"/>
</dbReference>
<dbReference type="SMR" id="B4TJ88"/>
<dbReference type="KEGG" id="seh:SeHA_C0141"/>
<dbReference type="HOGENOM" id="CLU_028104_2_2_6"/>
<dbReference type="UniPathway" id="UPA00219"/>
<dbReference type="Proteomes" id="UP000001866">
    <property type="component" value="Chromosome"/>
</dbReference>
<dbReference type="GO" id="GO:0005737">
    <property type="term" value="C:cytoplasm"/>
    <property type="evidence" value="ECO:0007669"/>
    <property type="project" value="UniProtKB-SubCell"/>
</dbReference>
<dbReference type="GO" id="GO:0005524">
    <property type="term" value="F:ATP binding"/>
    <property type="evidence" value="ECO:0007669"/>
    <property type="project" value="UniProtKB-UniRule"/>
</dbReference>
<dbReference type="GO" id="GO:0008763">
    <property type="term" value="F:UDP-N-acetylmuramate-L-alanine ligase activity"/>
    <property type="evidence" value="ECO:0007669"/>
    <property type="project" value="UniProtKB-UniRule"/>
</dbReference>
<dbReference type="GO" id="GO:0051301">
    <property type="term" value="P:cell division"/>
    <property type="evidence" value="ECO:0007669"/>
    <property type="project" value="UniProtKB-KW"/>
</dbReference>
<dbReference type="GO" id="GO:0071555">
    <property type="term" value="P:cell wall organization"/>
    <property type="evidence" value="ECO:0007669"/>
    <property type="project" value="UniProtKB-KW"/>
</dbReference>
<dbReference type="GO" id="GO:0009252">
    <property type="term" value="P:peptidoglycan biosynthetic process"/>
    <property type="evidence" value="ECO:0007669"/>
    <property type="project" value="UniProtKB-UniRule"/>
</dbReference>
<dbReference type="GO" id="GO:0008360">
    <property type="term" value="P:regulation of cell shape"/>
    <property type="evidence" value="ECO:0007669"/>
    <property type="project" value="UniProtKB-KW"/>
</dbReference>
<dbReference type="FunFam" id="3.40.1190.10:FF:000001">
    <property type="entry name" value="UDP-N-acetylmuramate--L-alanine ligase"/>
    <property type="match status" value="1"/>
</dbReference>
<dbReference type="FunFam" id="3.40.50.720:FF:000046">
    <property type="entry name" value="UDP-N-acetylmuramate--L-alanine ligase"/>
    <property type="match status" value="1"/>
</dbReference>
<dbReference type="FunFam" id="3.90.190.20:FF:000001">
    <property type="entry name" value="UDP-N-acetylmuramate--L-alanine ligase"/>
    <property type="match status" value="1"/>
</dbReference>
<dbReference type="Gene3D" id="3.90.190.20">
    <property type="entry name" value="Mur ligase, C-terminal domain"/>
    <property type="match status" value="1"/>
</dbReference>
<dbReference type="Gene3D" id="3.40.1190.10">
    <property type="entry name" value="Mur-like, catalytic domain"/>
    <property type="match status" value="1"/>
</dbReference>
<dbReference type="Gene3D" id="3.40.50.720">
    <property type="entry name" value="NAD(P)-binding Rossmann-like Domain"/>
    <property type="match status" value="1"/>
</dbReference>
<dbReference type="HAMAP" id="MF_00046">
    <property type="entry name" value="MurC"/>
    <property type="match status" value="1"/>
</dbReference>
<dbReference type="InterPro" id="IPR036565">
    <property type="entry name" value="Mur-like_cat_sf"/>
</dbReference>
<dbReference type="InterPro" id="IPR004101">
    <property type="entry name" value="Mur_ligase_C"/>
</dbReference>
<dbReference type="InterPro" id="IPR036615">
    <property type="entry name" value="Mur_ligase_C_dom_sf"/>
</dbReference>
<dbReference type="InterPro" id="IPR013221">
    <property type="entry name" value="Mur_ligase_cen"/>
</dbReference>
<dbReference type="InterPro" id="IPR000713">
    <property type="entry name" value="Mur_ligase_N"/>
</dbReference>
<dbReference type="InterPro" id="IPR050061">
    <property type="entry name" value="MurCDEF_pg_biosynth"/>
</dbReference>
<dbReference type="InterPro" id="IPR005758">
    <property type="entry name" value="UDP-N-AcMur_Ala_ligase_MurC"/>
</dbReference>
<dbReference type="NCBIfam" id="TIGR01082">
    <property type="entry name" value="murC"/>
    <property type="match status" value="1"/>
</dbReference>
<dbReference type="PANTHER" id="PTHR43445:SF3">
    <property type="entry name" value="UDP-N-ACETYLMURAMATE--L-ALANINE LIGASE"/>
    <property type="match status" value="1"/>
</dbReference>
<dbReference type="PANTHER" id="PTHR43445">
    <property type="entry name" value="UDP-N-ACETYLMURAMATE--L-ALANINE LIGASE-RELATED"/>
    <property type="match status" value="1"/>
</dbReference>
<dbReference type="Pfam" id="PF01225">
    <property type="entry name" value="Mur_ligase"/>
    <property type="match status" value="1"/>
</dbReference>
<dbReference type="Pfam" id="PF02875">
    <property type="entry name" value="Mur_ligase_C"/>
    <property type="match status" value="1"/>
</dbReference>
<dbReference type="Pfam" id="PF08245">
    <property type="entry name" value="Mur_ligase_M"/>
    <property type="match status" value="1"/>
</dbReference>
<dbReference type="SUPFAM" id="SSF51984">
    <property type="entry name" value="MurCD N-terminal domain"/>
    <property type="match status" value="1"/>
</dbReference>
<dbReference type="SUPFAM" id="SSF53623">
    <property type="entry name" value="MurD-like peptide ligases, catalytic domain"/>
    <property type="match status" value="1"/>
</dbReference>
<dbReference type="SUPFAM" id="SSF53244">
    <property type="entry name" value="MurD-like peptide ligases, peptide-binding domain"/>
    <property type="match status" value="1"/>
</dbReference>
<proteinExistence type="inferred from homology"/>
<keyword id="KW-0067">ATP-binding</keyword>
<keyword id="KW-0131">Cell cycle</keyword>
<keyword id="KW-0132">Cell division</keyword>
<keyword id="KW-0133">Cell shape</keyword>
<keyword id="KW-0961">Cell wall biogenesis/degradation</keyword>
<keyword id="KW-0963">Cytoplasm</keyword>
<keyword id="KW-0436">Ligase</keyword>
<keyword id="KW-0547">Nucleotide-binding</keyword>
<keyword id="KW-0573">Peptidoglycan synthesis</keyword>
<evidence type="ECO:0000255" key="1">
    <source>
        <dbReference type="HAMAP-Rule" id="MF_00046"/>
    </source>
</evidence>
<sequence>MNTQQLAKLRSIVPEMRRVRHIHFVGIGGAGMGGIAEVLANEGYQISGSDLAPNPVTQQLTSLGATIFFNHRPENVRDASVVVVSSAISADNPEIVAAHEARIPVIRRAEMLAELMRFRHGIAIAGTHGKTTTTAMVSSIYAEAGLDPTFVNGGLVKAAGVHARLGHSRYLIAEADESDASFLHLQPMVAIVTNIEADHMDTYHGDFENLKQTFINFLHNLPFYGRAVMCVDDPVIRELLPRVGRQTTTYGFSEDADVRVEDYQQIGPQGHFTLLRQGMPDLHVTLNAPGRHNALNAAAAVAVATEEGIADDAILRALESFQGTGRRFDFLGEFPLEPVNGKAGTAMLVDDYGHHPTEVDATIKAARAGWPDKNLVMLFQPHRYTRTRDLYDDFANVLTQVDALLMLDVYPAGEAPIPGADSRSLCRTIRNRGKIDPILVSDPAQVATMLAPVLTGNDLILVQGAGNVGKIARYLSEIKLKPQIQEEEQHG</sequence>
<name>MURC_SALHS</name>
<organism>
    <name type="scientific">Salmonella heidelberg (strain SL476)</name>
    <dbReference type="NCBI Taxonomy" id="454169"/>
    <lineage>
        <taxon>Bacteria</taxon>
        <taxon>Pseudomonadati</taxon>
        <taxon>Pseudomonadota</taxon>
        <taxon>Gammaproteobacteria</taxon>
        <taxon>Enterobacterales</taxon>
        <taxon>Enterobacteriaceae</taxon>
        <taxon>Salmonella</taxon>
    </lineage>
</organism>
<comment type="function">
    <text evidence="1">Cell wall formation.</text>
</comment>
<comment type="catalytic activity">
    <reaction evidence="1">
        <text>UDP-N-acetyl-alpha-D-muramate + L-alanine + ATP = UDP-N-acetyl-alpha-D-muramoyl-L-alanine + ADP + phosphate + H(+)</text>
        <dbReference type="Rhea" id="RHEA:23372"/>
        <dbReference type="ChEBI" id="CHEBI:15378"/>
        <dbReference type="ChEBI" id="CHEBI:30616"/>
        <dbReference type="ChEBI" id="CHEBI:43474"/>
        <dbReference type="ChEBI" id="CHEBI:57972"/>
        <dbReference type="ChEBI" id="CHEBI:70757"/>
        <dbReference type="ChEBI" id="CHEBI:83898"/>
        <dbReference type="ChEBI" id="CHEBI:456216"/>
        <dbReference type="EC" id="6.3.2.8"/>
    </reaction>
</comment>
<comment type="pathway">
    <text evidence="1">Cell wall biogenesis; peptidoglycan biosynthesis.</text>
</comment>
<comment type="subcellular location">
    <subcellularLocation>
        <location evidence="1">Cytoplasm</location>
    </subcellularLocation>
</comment>
<comment type="similarity">
    <text evidence="1">Belongs to the MurCDEF family.</text>
</comment>
<reference key="1">
    <citation type="journal article" date="2011" name="J. Bacteriol.">
        <title>Comparative genomics of 28 Salmonella enterica isolates: evidence for CRISPR-mediated adaptive sublineage evolution.</title>
        <authorList>
            <person name="Fricke W.F."/>
            <person name="Mammel M.K."/>
            <person name="McDermott P.F."/>
            <person name="Tartera C."/>
            <person name="White D.G."/>
            <person name="Leclerc J.E."/>
            <person name="Ravel J."/>
            <person name="Cebula T.A."/>
        </authorList>
    </citation>
    <scope>NUCLEOTIDE SEQUENCE [LARGE SCALE GENOMIC DNA]</scope>
    <source>
        <strain>SL476</strain>
    </source>
</reference>
<feature type="chain" id="PRO_1000091132" description="UDP-N-acetylmuramate--L-alanine ligase">
    <location>
        <begin position="1"/>
        <end position="491"/>
    </location>
</feature>
<feature type="binding site" evidence="1">
    <location>
        <begin position="126"/>
        <end position="132"/>
    </location>
    <ligand>
        <name>ATP</name>
        <dbReference type="ChEBI" id="CHEBI:30616"/>
    </ligand>
</feature>
<accession>B4TJ88</accession>
<gene>
    <name evidence="1" type="primary">murC</name>
    <name type="ordered locus">SeHA_C0141</name>
</gene>
<protein>
    <recommendedName>
        <fullName evidence="1">UDP-N-acetylmuramate--L-alanine ligase</fullName>
        <ecNumber evidence="1">6.3.2.8</ecNumber>
    </recommendedName>
    <alternativeName>
        <fullName evidence="1">UDP-N-acetylmuramoyl-L-alanine synthetase</fullName>
    </alternativeName>
</protein>